<name>PEPE_ECODH</name>
<sequence length="229" mass="24570">MELLLLSNSTLPGKAWLEHALPLIAEQLQGRRSAVFIPFAGVTQTWDDYTAKTAAVLAPLGVSVTGIHSVVDPVAAIENAEIVIVGGGNTFQLLKQCRERGLLAPITDVVKRGALYIGWSAGANLACPTIRTTNDMPIVDPQGFDALNLFPLQINPHFTNALPEGHKGETREQRIRELLVVAPELTIIGLPEGNWITVSKGHATLGGPNTTYVFKAGEEAVPLEAGHRF</sequence>
<comment type="function">
    <text evidence="1">Hydrolyzes dipeptides containing N-terminal aspartate residues. May play a role in allowing the cell to use peptide aspartate to spare carbon otherwise required for the synthesis of the aspartate family of amino acids.</text>
</comment>
<comment type="catalytic activity">
    <reaction evidence="1">
        <text>Dipeptidase E catalyzes the hydrolysis of dipeptides Asp-|-Xaa. It does not act on peptides with N-terminal Glu, Asn or Gln, nor does it cleave isoaspartyl peptides.</text>
        <dbReference type="EC" id="3.4.13.21"/>
    </reaction>
</comment>
<comment type="subcellular location">
    <subcellularLocation>
        <location evidence="1">Cytoplasm</location>
    </subcellularLocation>
</comment>
<comment type="similarity">
    <text evidence="1">Belongs to the peptidase S51 family.</text>
</comment>
<organism>
    <name type="scientific">Escherichia coli (strain K12 / DH10B)</name>
    <dbReference type="NCBI Taxonomy" id="316385"/>
    <lineage>
        <taxon>Bacteria</taxon>
        <taxon>Pseudomonadati</taxon>
        <taxon>Pseudomonadota</taxon>
        <taxon>Gammaproteobacteria</taxon>
        <taxon>Enterobacterales</taxon>
        <taxon>Enterobacteriaceae</taxon>
        <taxon>Escherichia</taxon>
    </lineage>
</organism>
<proteinExistence type="inferred from homology"/>
<dbReference type="EC" id="3.4.13.21" evidence="1"/>
<dbReference type="EMBL" id="CP000948">
    <property type="protein sequence ID" value="ACB05020.1"/>
    <property type="molecule type" value="Genomic_DNA"/>
</dbReference>
<dbReference type="RefSeq" id="WP_000421763.1">
    <property type="nucleotide sequence ID" value="NC_010473.1"/>
</dbReference>
<dbReference type="SMR" id="B1XC20"/>
<dbReference type="MEROPS" id="S51.001"/>
<dbReference type="GeneID" id="93777874"/>
<dbReference type="KEGG" id="ecd:ECDH10B_4210"/>
<dbReference type="HOGENOM" id="CLU_071689_0_0_6"/>
<dbReference type="GO" id="GO:0005737">
    <property type="term" value="C:cytoplasm"/>
    <property type="evidence" value="ECO:0007669"/>
    <property type="project" value="UniProtKB-SubCell"/>
</dbReference>
<dbReference type="GO" id="GO:0016805">
    <property type="term" value="F:dipeptidase activity"/>
    <property type="evidence" value="ECO:0007669"/>
    <property type="project" value="UniProtKB-UniRule"/>
</dbReference>
<dbReference type="GO" id="GO:0008236">
    <property type="term" value="F:serine-type peptidase activity"/>
    <property type="evidence" value="ECO:0007669"/>
    <property type="project" value="UniProtKB-KW"/>
</dbReference>
<dbReference type="GO" id="GO:0006508">
    <property type="term" value="P:proteolysis"/>
    <property type="evidence" value="ECO:0007669"/>
    <property type="project" value="UniProtKB-UniRule"/>
</dbReference>
<dbReference type="CDD" id="cd03146">
    <property type="entry name" value="GAT1_Peptidase_E"/>
    <property type="match status" value="1"/>
</dbReference>
<dbReference type="FunFam" id="3.40.50.880:FF:000007">
    <property type="entry name" value="Peptidase E"/>
    <property type="match status" value="1"/>
</dbReference>
<dbReference type="Gene3D" id="3.40.50.880">
    <property type="match status" value="1"/>
</dbReference>
<dbReference type="HAMAP" id="MF_00510">
    <property type="entry name" value="Peptidase_E"/>
    <property type="match status" value="1"/>
</dbReference>
<dbReference type="InterPro" id="IPR029062">
    <property type="entry name" value="Class_I_gatase-like"/>
</dbReference>
<dbReference type="InterPro" id="IPR005320">
    <property type="entry name" value="Peptidase_S51"/>
</dbReference>
<dbReference type="InterPro" id="IPR023172">
    <property type="entry name" value="Peptidase_S51_dipeptidase-E"/>
</dbReference>
<dbReference type="NCBIfam" id="NF003642">
    <property type="entry name" value="PRK05282.1"/>
    <property type="match status" value="1"/>
</dbReference>
<dbReference type="PANTHER" id="PTHR20842:SF0">
    <property type="entry name" value="ALPHA-ASPARTYL DIPEPTIDASE"/>
    <property type="match status" value="1"/>
</dbReference>
<dbReference type="PANTHER" id="PTHR20842">
    <property type="entry name" value="PROTEASE S51 ALPHA-ASPARTYL DIPEPTIDASE"/>
    <property type="match status" value="1"/>
</dbReference>
<dbReference type="Pfam" id="PF03575">
    <property type="entry name" value="Peptidase_S51"/>
    <property type="match status" value="1"/>
</dbReference>
<dbReference type="SUPFAM" id="SSF52317">
    <property type="entry name" value="Class I glutamine amidotransferase-like"/>
    <property type="match status" value="1"/>
</dbReference>
<keyword id="KW-0963">Cytoplasm</keyword>
<keyword id="KW-0224">Dipeptidase</keyword>
<keyword id="KW-0378">Hydrolase</keyword>
<keyword id="KW-0645">Protease</keyword>
<keyword id="KW-0720">Serine protease</keyword>
<accession>B1XC20</accession>
<protein>
    <recommendedName>
        <fullName evidence="1">Peptidase E</fullName>
        <ecNumber evidence="1">3.4.13.21</ecNumber>
    </recommendedName>
    <alternativeName>
        <fullName evidence="1">Alpha-aspartyl dipeptidase</fullName>
    </alternativeName>
    <alternativeName>
        <fullName evidence="1">Asp-specific dipeptidase</fullName>
    </alternativeName>
    <alternativeName>
        <fullName evidence="1">Dipeptidase E</fullName>
    </alternativeName>
</protein>
<gene>
    <name evidence="1" type="primary">pepE</name>
    <name type="ordered locus">ECDH10B_4210</name>
</gene>
<feature type="chain" id="PRO_1000127244" description="Peptidase E">
    <location>
        <begin position="1"/>
        <end position="229"/>
    </location>
</feature>
<feature type="active site" description="Charge relay system" evidence="1">
    <location>
        <position position="120"/>
    </location>
</feature>
<feature type="active site" description="Charge relay system" evidence="1">
    <location>
        <position position="135"/>
    </location>
</feature>
<feature type="active site" description="Charge relay system" evidence="1">
    <location>
        <position position="157"/>
    </location>
</feature>
<reference key="1">
    <citation type="journal article" date="2008" name="J. Bacteriol.">
        <title>The complete genome sequence of Escherichia coli DH10B: insights into the biology of a laboratory workhorse.</title>
        <authorList>
            <person name="Durfee T."/>
            <person name="Nelson R."/>
            <person name="Baldwin S."/>
            <person name="Plunkett G. III"/>
            <person name="Burland V."/>
            <person name="Mau B."/>
            <person name="Petrosino J.F."/>
            <person name="Qin X."/>
            <person name="Muzny D.M."/>
            <person name="Ayele M."/>
            <person name="Gibbs R.A."/>
            <person name="Csorgo B."/>
            <person name="Posfai G."/>
            <person name="Weinstock G.M."/>
            <person name="Blattner F.R."/>
        </authorList>
    </citation>
    <scope>NUCLEOTIDE SEQUENCE [LARGE SCALE GENOMIC DNA]</scope>
    <source>
        <strain>K12 / DH10B</strain>
    </source>
</reference>
<evidence type="ECO:0000255" key="1">
    <source>
        <dbReference type="HAMAP-Rule" id="MF_00510"/>
    </source>
</evidence>